<feature type="chain" id="PRO_0000301763" description="Vacuolar membrane-associated protein iml1">
    <location>
        <begin position="1"/>
        <end position="1836"/>
    </location>
</feature>
<feature type="domain" description="DEP" evidence="2">
    <location>
        <begin position="1337"/>
        <end position="1412"/>
    </location>
</feature>
<feature type="region of interest" description="Disordered" evidence="3">
    <location>
        <begin position="1"/>
        <end position="51"/>
    </location>
</feature>
<feature type="region of interest" description="Disordered" evidence="3">
    <location>
        <begin position="727"/>
        <end position="816"/>
    </location>
</feature>
<feature type="region of interest" description="Disordered" evidence="3">
    <location>
        <begin position="886"/>
        <end position="975"/>
    </location>
</feature>
<feature type="region of interest" description="Disordered" evidence="3">
    <location>
        <begin position="1421"/>
        <end position="1471"/>
    </location>
</feature>
<feature type="region of interest" description="Disordered" evidence="3">
    <location>
        <begin position="1814"/>
        <end position="1836"/>
    </location>
</feature>
<feature type="compositionally biased region" description="Basic residues" evidence="3">
    <location>
        <begin position="1"/>
        <end position="12"/>
    </location>
</feature>
<feature type="compositionally biased region" description="Polar residues" evidence="3">
    <location>
        <begin position="16"/>
        <end position="31"/>
    </location>
</feature>
<feature type="compositionally biased region" description="Basic and acidic residues" evidence="3">
    <location>
        <begin position="36"/>
        <end position="51"/>
    </location>
</feature>
<feature type="compositionally biased region" description="Basic residues" evidence="3">
    <location>
        <begin position="727"/>
        <end position="737"/>
    </location>
</feature>
<feature type="compositionally biased region" description="Basic and acidic residues" evidence="3">
    <location>
        <begin position="749"/>
        <end position="766"/>
    </location>
</feature>
<feature type="compositionally biased region" description="Low complexity" evidence="3">
    <location>
        <begin position="794"/>
        <end position="813"/>
    </location>
</feature>
<feature type="compositionally biased region" description="Polar residues" evidence="3">
    <location>
        <begin position="962"/>
        <end position="975"/>
    </location>
</feature>
<dbReference type="EMBL" id="AAHF01000008">
    <property type="protein sequence ID" value="EAL87631.1"/>
    <property type="molecule type" value="Genomic_DNA"/>
</dbReference>
<dbReference type="RefSeq" id="XP_749669.1">
    <property type="nucleotide sequence ID" value="XM_744576.1"/>
</dbReference>
<dbReference type="SMR" id="Q4WHH4"/>
<dbReference type="FunCoup" id="Q4WHH4">
    <property type="interactions" value="634"/>
</dbReference>
<dbReference type="STRING" id="330879.Q4WHH4"/>
<dbReference type="EnsemblFungi" id="EAL87631">
    <property type="protein sequence ID" value="EAL87631"/>
    <property type="gene ID" value="AFUA_2G05390"/>
</dbReference>
<dbReference type="GeneID" id="3506914"/>
<dbReference type="KEGG" id="afm:AFUA_2G05390"/>
<dbReference type="VEuPathDB" id="FungiDB:Afu2g05390"/>
<dbReference type="eggNOG" id="KOG3572">
    <property type="taxonomic scope" value="Eukaryota"/>
</dbReference>
<dbReference type="HOGENOM" id="CLU_000935_1_1_1"/>
<dbReference type="InParanoid" id="Q4WHH4"/>
<dbReference type="OMA" id="SWMNATP"/>
<dbReference type="OrthoDB" id="39497at2759"/>
<dbReference type="Proteomes" id="UP000002530">
    <property type="component" value="Chromosome 2"/>
</dbReference>
<dbReference type="GO" id="GO:1990130">
    <property type="term" value="C:GATOR1 complex"/>
    <property type="evidence" value="ECO:0000318"/>
    <property type="project" value="GO_Central"/>
</dbReference>
<dbReference type="GO" id="GO:0005774">
    <property type="term" value="C:vacuolar membrane"/>
    <property type="evidence" value="ECO:0007669"/>
    <property type="project" value="UniProtKB-SubCell"/>
</dbReference>
<dbReference type="GO" id="GO:0005096">
    <property type="term" value="F:GTPase activator activity"/>
    <property type="evidence" value="ECO:0007669"/>
    <property type="project" value="InterPro"/>
</dbReference>
<dbReference type="GO" id="GO:0035556">
    <property type="term" value="P:intracellular signal transduction"/>
    <property type="evidence" value="ECO:0007669"/>
    <property type="project" value="InterPro"/>
</dbReference>
<dbReference type="GO" id="GO:1904262">
    <property type="term" value="P:negative regulation of TORC1 signaling"/>
    <property type="evidence" value="ECO:0000318"/>
    <property type="project" value="GO_Central"/>
</dbReference>
<dbReference type="GO" id="GO:0010508">
    <property type="term" value="P:positive regulation of autophagy"/>
    <property type="evidence" value="ECO:0000318"/>
    <property type="project" value="GO_Central"/>
</dbReference>
<dbReference type="CDD" id="cd04449">
    <property type="entry name" value="DEP_DEPDC5-like"/>
    <property type="match status" value="1"/>
</dbReference>
<dbReference type="FunFam" id="1.10.10.10:FF:001090">
    <property type="entry name" value="Vacuolar membrane-associated protein iml1"/>
    <property type="match status" value="1"/>
</dbReference>
<dbReference type="Gene3D" id="1.10.10.10">
    <property type="entry name" value="Winged helix-like DNA-binding domain superfamily/Winged helix DNA-binding domain"/>
    <property type="match status" value="1"/>
</dbReference>
<dbReference type="InterPro" id="IPR000591">
    <property type="entry name" value="DEP_dom"/>
</dbReference>
<dbReference type="InterPro" id="IPR045838">
    <property type="entry name" value="DEPDC5_CTD"/>
</dbReference>
<dbReference type="InterPro" id="IPR027244">
    <property type="entry name" value="IML1"/>
</dbReference>
<dbReference type="InterPro" id="IPR048255">
    <property type="entry name" value="IML1_N"/>
</dbReference>
<dbReference type="InterPro" id="IPR036388">
    <property type="entry name" value="WH-like_DNA-bd_sf"/>
</dbReference>
<dbReference type="InterPro" id="IPR036390">
    <property type="entry name" value="WH_DNA-bd_sf"/>
</dbReference>
<dbReference type="PANTHER" id="PTHR13179">
    <property type="entry name" value="DEP DOMAIN CONTAINING PROTEIN 5"/>
    <property type="match status" value="1"/>
</dbReference>
<dbReference type="PANTHER" id="PTHR13179:SF8">
    <property type="entry name" value="GATOR COMPLEX PROTEIN DEPDC5"/>
    <property type="match status" value="1"/>
</dbReference>
<dbReference type="Pfam" id="PF00610">
    <property type="entry name" value="DEP"/>
    <property type="match status" value="1"/>
</dbReference>
<dbReference type="Pfam" id="PF19418">
    <property type="entry name" value="DEPDC5_CTD"/>
    <property type="match status" value="1"/>
</dbReference>
<dbReference type="Pfam" id="PF12257">
    <property type="entry name" value="IML1"/>
    <property type="match status" value="1"/>
</dbReference>
<dbReference type="Pfam" id="PF24438">
    <property type="entry name" value="IML1_N_fung"/>
    <property type="match status" value="1"/>
</dbReference>
<dbReference type="SMART" id="SM00049">
    <property type="entry name" value="DEP"/>
    <property type="match status" value="1"/>
</dbReference>
<dbReference type="SUPFAM" id="SSF46785">
    <property type="entry name" value="Winged helix' DNA-binding domain"/>
    <property type="match status" value="1"/>
</dbReference>
<dbReference type="PROSITE" id="PS50186">
    <property type="entry name" value="DEP"/>
    <property type="match status" value="1"/>
</dbReference>
<proteinExistence type="inferred from homology"/>
<keyword id="KW-0472">Membrane</keyword>
<keyword id="KW-1185">Reference proteome</keyword>
<keyword id="KW-0926">Vacuole</keyword>
<comment type="subcellular location">
    <subcellularLocation>
        <location evidence="1">Vacuole membrane</location>
        <topology evidence="1">Peripheral membrane protein</topology>
    </subcellularLocation>
</comment>
<comment type="similarity">
    <text evidence="4">Belongs to the IML1 family.</text>
</comment>
<protein>
    <recommendedName>
        <fullName>Vacuolar membrane-associated protein iml1</fullName>
    </recommendedName>
</protein>
<accession>Q4WHH4</accession>
<evidence type="ECO:0000250" key="1"/>
<evidence type="ECO:0000255" key="2">
    <source>
        <dbReference type="PROSITE-ProRule" id="PRU00066"/>
    </source>
</evidence>
<evidence type="ECO:0000256" key="3">
    <source>
        <dbReference type="SAM" id="MobiDB-lite"/>
    </source>
</evidence>
<evidence type="ECO:0000305" key="4"/>
<sequence>MALRGPMKRSHLRQVSAPSVDSLSVPQSQSPEALYNDERSHQDVHATPDERTIRLSSGSLERRQCSLWVHDETFSREEILFNQAAFSDLNVNVGDVIEILPVRSPGDSIHSLKSDLGARSLRDSYLESGSAHLPDPMSKFKTPLQSRCLFVVKPLPQEIKARHPKLEISVTHSVANIFGFKNRTLVNISVVDRGQCSASHVDIAFRDQFLVRSDMWRLVMSELADKIIYKGQKIVFMGSIKATVKNIFIRGKKVLSGYFSPHTIPVFRSESAKYVLFIQMSREMWDFDSEGTGDILFSRVINGFLPELFKRWANSDAKHLVTIVLFTRVEYDSSALGGPLPLSSESLRCISSPNHAPTRDFYRVVVNDMASGHWTTILDELKKDFRTFLRDVSILKMDRPDTPTVDGVKVAPKNKPAIIAGRPSTALRGNILEAIHLASAHLAYDHIDRDLVHTGTSIIVITPGSGVFEVSYESLSSTSEALADRGIAIDLVCLSPMPLHSVPLFKYKAPVERSGSSSFGDFHSTGYSPEMRQSFSFASRTPHLSPKSTMQGSFPGMTRKEHLSARSDEWNYGIPHWLDISYWNPETYREARRIAKKDPNAPIPFTVTKQSKLFVPRVRMYEIQMMGVMESEQSDISIPYLLEGQGVSRPSNAGLGLGPSGLSSRASFRRNSSYKAQLSDSLRPEPFLQNITNPRDVMLAKAKKTPNQVIAWMDQYDEAVFQPFAKRRQQRKASRPKRPSEPEVQVSNAHERLSARSVLRLREHETNSNSGDRSYPTRTIPRVSETLSVPQGPAPSKASTSPKKPALKAPSAARTPRMSRTISFALLGFGATPPRAQASTEVNVEHARAQPTSGQKKPSVGFMDTRSVESFSGSDSASISTVIDTSLRPASPHPAPQTSAMTPTRPISIKVPPRQPSEDTEPVDRTVLPESYSTTSTAIPFTGDGRRDSRTKNGPSFELTVSGGSRESSIKSPQNKALAPWVRSINPCNTSRDVLRDTSWFGRWQHAYPRPPHVAVVKWKSLKSPAILPLTTEEFPTAQELGSDYLQTPYRVFPNDDPEGVEVPKTRGILLREMISLRLSHGFQIVIGKHVAEVSGQPALETLNVFDTRSLERDGATVFLSKGNTIHRLICVDGGEIEVTRFTHRTSSTLAAGKRDGFSLYTPAMRTILSTEYELKNIKLDPTAEDYNWNYADNYVAGHRDYLFNPAQQLQFWRVRYVLIPMPLQVNNRRHLQSFNEDNEEEIHLLGINQLTHIWQRHRYVPPEEKRFESSNEKKDQNPLNIMYQTRNPSEVVAAELDRILLSDPGLDNSPAQLLPESELLERSSISLSSLAQIIQGEKGVRMMDRRWHWRLHYNCFIGFEFTTWLLQNFRDIDSREEAVQFGNELMKHGLFQHVEKRHNFRDGNYFYQISSEYRVARPESRGSWFPQKKPDKQVPSTGASENPRDSAVNGHSRSESVETPATPSKSKNKATIMLSKMMKYDVDPRKRSNRPEVIDLHYDRLHNPDNCFHIELSWMNTTPKLIEDAVLSWAATAEKFGLKLVQVPIAEGCAISRTQPFRKPYRVSLAVPPPPGPVPTVFNTATFSQLGSSDRHYYHKALLRKFDFVLDFEARSAFPADVEVSYSWGTPDYQYPQYIHRSGSLLVQITDEGDFLFLANRLVSTRLAAATREGSRYERMDRPEHLRARASTHDPLDRISPRLSPLVRPLHDIGSPISPQGQPSIDLAQLYRAPEHILNSFEEFCNDAARLEQFYSVSHARPASTKVGPAPTTVMDSSIPTLELPASVVSHHIQSPALTTRASVDGSMPSVDAMTRARNDSLSYKGSPKSGSLRPLNIN</sequence>
<gene>
    <name type="primary">iml1</name>
    <name type="ORF">AFUA_2G05390</name>
</gene>
<reference key="1">
    <citation type="journal article" date="2005" name="Nature">
        <title>Genomic sequence of the pathogenic and allergenic filamentous fungus Aspergillus fumigatus.</title>
        <authorList>
            <person name="Nierman W.C."/>
            <person name="Pain A."/>
            <person name="Anderson M.J."/>
            <person name="Wortman J.R."/>
            <person name="Kim H.S."/>
            <person name="Arroyo J."/>
            <person name="Berriman M."/>
            <person name="Abe K."/>
            <person name="Archer D.B."/>
            <person name="Bermejo C."/>
            <person name="Bennett J.W."/>
            <person name="Bowyer P."/>
            <person name="Chen D."/>
            <person name="Collins M."/>
            <person name="Coulsen R."/>
            <person name="Davies R."/>
            <person name="Dyer P.S."/>
            <person name="Farman M.L."/>
            <person name="Fedorova N."/>
            <person name="Fedorova N.D."/>
            <person name="Feldblyum T.V."/>
            <person name="Fischer R."/>
            <person name="Fosker N."/>
            <person name="Fraser A."/>
            <person name="Garcia J.L."/>
            <person name="Garcia M.J."/>
            <person name="Goble A."/>
            <person name="Goldman G.H."/>
            <person name="Gomi K."/>
            <person name="Griffith-Jones S."/>
            <person name="Gwilliam R."/>
            <person name="Haas B.J."/>
            <person name="Haas H."/>
            <person name="Harris D.E."/>
            <person name="Horiuchi H."/>
            <person name="Huang J."/>
            <person name="Humphray S."/>
            <person name="Jimenez J."/>
            <person name="Keller N."/>
            <person name="Khouri H."/>
            <person name="Kitamoto K."/>
            <person name="Kobayashi T."/>
            <person name="Konzack S."/>
            <person name="Kulkarni R."/>
            <person name="Kumagai T."/>
            <person name="Lafton A."/>
            <person name="Latge J.-P."/>
            <person name="Li W."/>
            <person name="Lord A."/>
            <person name="Lu C."/>
            <person name="Majoros W.H."/>
            <person name="May G.S."/>
            <person name="Miller B.L."/>
            <person name="Mohamoud Y."/>
            <person name="Molina M."/>
            <person name="Monod M."/>
            <person name="Mouyna I."/>
            <person name="Mulligan S."/>
            <person name="Murphy L.D."/>
            <person name="O'Neil S."/>
            <person name="Paulsen I."/>
            <person name="Penalva M.A."/>
            <person name="Pertea M."/>
            <person name="Price C."/>
            <person name="Pritchard B.L."/>
            <person name="Quail M.A."/>
            <person name="Rabbinowitsch E."/>
            <person name="Rawlins N."/>
            <person name="Rajandream M.A."/>
            <person name="Reichard U."/>
            <person name="Renauld H."/>
            <person name="Robson G.D."/>
            <person name="Rodriguez de Cordoba S."/>
            <person name="Rodriguez-Pena J.M."/>
            <person name="Ronning C.M."/>
            <person name="Rutter S."/>
            <person name="Salzberg S.L."/>
            <person name="Sanchez M."/>
            <person name="Sanchez-Ferrero J.C."/>
            <person name="Saunders D."/>
            <person name="Seeger K."/>
            <person name="Squares R."/>
            <person name="Squares S."/>
            <person name="Takeuchi M."/>
            <person name="Tekaia F."/>
            <person name="Turner G."/>
            <person name="Vazquez de Aldana C.R."/>
            <person name="Weidman J."/>
            <person name="White O."/>
            <person name="Woodward J.R."/>
            <person name="Yu J.-H."/>
            <person name="Fraser C.M."/>
            <person name="Galagan J.E."/>
            <person name="Asai K."/>
            <person name="Machida M."/>
            <person name="Hall N."/>
            <person name="Barrell B.G."/>
            <person name="Denning D.W."/>
        </authorList>
    </citation>
    <scope>NUCLEOTIDE SEQUENCE [LARGE SCALE GENOMIC DNA]</scope>
    <source>
        <strain>ATCC MYA-4609 / CBS 101355 / FGSC A1100 / Af293</strain>
    </source>
</reference>
<organism>
    <name type="scientific">Aspergillus fumigatus (strain ATCC MYA-4609 / CBS 101355 / FGSC A1100 / Af293)</name>
    <name type="common">Neosartorya fumigata</name>
    <dbReference type="NCBI Taxonomy" id="330879"/>
    <lineage>
        <taxon>Eukaryota</taxon>
        <taxon>Fungi</taxon>
        <taxon>Dikarya</taxon>
        <taxon>Ascomycota</taxon>
        <taxon>Pezizomycotina</taxon>
        <taxon>Eurotiomycetes</taxon>
        <taxon>Eurotiomycetidae</taxon>
        <taxon>Eurotiales</taxon>
        <taxon>Aspergillaceae</taxon>
        <taxon>Aspergillus</taxon>
        <taxon>Aspergillus subgen. Fumigati</taxon>
    </lineage>
</organism>
<name>IML1_ASPFU</name>